<reference key="1">
    <citation type="journal article" date="2006" name="J. Bacteriol.">
        <title>Complete genome sequence of Yersinia pestis strains Antiqua and Nepal516: evidence of gene reduction in an emerging pathogen.</title>
        <authorList>
            <person name="Chain P.S.G."/>
            <person name="Hu P."/>
            <person name="Malfatti S.A."/>
            <person name="Radnedge L."/>
            <person name="Larimer F."/>
            <person name="Vergez L.M."/>
            <person name="Worsham P."/>
            <person name="Chu M.C."/>
            <person name="Andersen G.L."/>
        </authorList>
    </citation>
    <scope>NUCLEOTIDE SEQUENCE [LARGE SCALE GENOMIC DNA]</scope>
    <source>
        <strain>Antiqua</strain>
    </source>
</reference>
<accession>Q1C1L2</accession>
<name>AAEA_YERPA</name>
<sequence length="311" mass="34315">MSTFSLKIIRVGITVLVVVLAVIAIFNVWAFYTESPWTRDAKFTADVVAIAPDVSGLLTEVPVKDNQLVQKGQILFVIDQPRYQQALAEAEADVAYYQTLAAEKQRESSRRHRLGIQALSQEEIDQASNVLQTVQHQLAKAIAVRDLARLDLERTTVRAPAEGWVTNLNVHAGEFINRGATAVALVKKDTFYILAYLEETKLEGVKPGYRAEITPLGSNRILHGTVDSISAGVTNSSSSADSKGLATIDNNLEWVRLAQRVPVKIHLDSEDQQYLYPAGTTATVVITGPNDRDPHQASPMTKLMHRLREFG</sequence>
<evidence type="ECO:0000255" key="1">
    <source>
        <dbReference type="HAMAP-Rule" id="MF_01544"/>
    </source>
</evidence>
<proteinExistence type="inferred from homology"/>
<organism>
    <name type="scientific">Yersinia pestis bv. Antiqua (strain Antiqua)</name>
    <dbReference type="NCBI Taxonomy" id="360102"/>
    <lineage>
        <taxon>Bacteria</taxon>
        <taxon>Pseudomonadati</taxon>
        <taxon>Pseudomonadota</taxon>
        <taxon>Gammaproteobacteria</taxon>
        <taxon>Enterobacterales</taxon>
        <taxon>Yersiniaceae</taxon>
        <taxon>Yersinia</taxon>
    </lineage>
</organism>
<dbReference type="EMBL" id="CP000308">
    <property type="protein sequence ID" value="ABG15660.1"/>
    <property type="molecule type" value="Genomic_DNA"/>
</dbReference>
<dbReference type="RefSeq" id="WP_002210094.1">
    <property type="nucleotide sequence ID" value="NZ_CP009906.1"/>
</dbReference>
<dbReference type="SMR" id="Q1C1L2"/>
<dbReference type="GeneID" id="57975110"/>
<dbReference type="KEGG" id="ypa:YPA_3698"/>
<dbReference type="Proteomes" id="UP000001971">
    <property type="component" value="Chromosome"/>
</dbReference>
<dbReference type="GO" id="GO:0005886">
    <property type="term" value="C:plasma membrane"/>
    <property type="evidence" value="ECO:0007669"/>
    <property type="project" value="UniProtKB-SubCell"/>
</dbReference>
<dbReference type="GO" id="GO:0022857">
    <property type="term" value="F:transmembrane transporter activity"/>
    <property type="evidence" value="ECO:0007669"/>
    <property type="project" value="UniProtKB-UniRule"/>
</dbReference>
<dbReference type="Gene3D" id="2.40.30.170">
    <property type="match status" value="1"/>
</dbReference>
<dbReference type="Gene3D" id="2.40.50.100">
    <property type="match status" value="1"/>
</dbReference>
<dbReference type="HAMAP" id="MF_01544">
    <property type="entry name" value="AaeA"/>
    <property type="match status" value="1"/>
</dbReference>
<dbReference type="InterPro" id="IPR043602">
    <property type="entry name" value="CusB-like_dom_1"/>
</dbReference>
<dbReference type="InterPro" id="IPR032317">
    <property type="entry name" value="CusB_D23"/>
</dbReference>
<dbReference type="InterPro" id="IPR050393">
    <property type="entry name" value="MFP_Efflux_Pump"/>
</dbReference>
<dbReference type="InterPro" id="IPR022871">
    <property type="entry name" value="PHBA_efflux_pump_AaeA"/>
</dbReference>
<dbReference type="InterPro" id="IPR006143">
    <property type="entry name" value="RND_pump_MFP"/>
</dbReference>
<dbReference type="NCBIfam" id="NF007850">
    <property type="entry name" value="PRK10559.1"/>
    <property type="match status" value="1"/>
</dbReference>
<dbReference type="NCBIfam" id="TIGR01730">
    <property type="entry name" value="RND_mfp"/>
    <property type="match status" value="1"/>
</dbReference>
<dbReference type="PANTHER" id="PTHR30367:SF12">
    <property type="entry name" value="P-HYDROXYBENZOIC ACID EFFLUX PUMP SUBUNIT AAEA"/>
    <property type="match status" value="1"/>
</dbReference>
<dbReference type="PANTHER" id="PTHR30367">
    <property type="entry name" value="P-HYDROXYBENZOIC ACID EFFLUX PUMP SUBUNIT AAEA-RELATED"/>
    <property type="match status" value="1"/>
</dbReference>
<dbReference type="Pfam" id="PF00529">
    <property type="entry name" value="CusB_dom_1"/>
    <property type="match status" value="1"/>
</dbReference>
<dbReference type="Pfam" id="PF16576">
    <property type="entry name" value="HlyD_D23"/>
    <property type="match status" value="1"/>
</dbReference>
<dbReference type="SUPFAM" id="SSF111369">
    <property type="entry name" value="HlyD-like secretion proteins"/>
    <property type="match status" value="1"/>
</dbReference>
<keyword id="KW-0997">Cell inner membrane</keyword>
<keyword id="KW-1003">Cell membrane</keyword>
<keyword id="KW-0472">Membrane</keyword>
<keyword id="KW-0812">Transmembrane</keyword>
<keyword id="KW-1133">Transmembrane helix</keyword>
<keyword id="KW-0813">Transport</keyword>
<protein>
    <recommendedName>
        <fullName evidence="1">p-hydroxybenzoic acid efflux pump subunit AaeA</fullName>
        <shortName evidence="1">pHBA efflux pump protein A</shortName>
    </recommendedName>
</protein>
<gene>
    <name evidence="1" type="primary">aaeA</name>
    <name type="ordered locus">YPA_3698</name>
</gene>
<comment type="function">
    <text evidence="1">Forms an efflux pump with AaeB.</text>
</comment>
<comment type="subcellular location">
    <subcellularLocation>
        <location evidence="1">Cell inner membrane</location>
        <topology evidence="1">Single-pass membrane protein</topology>
    </subcellularLocation>
</comment>
<comment type="similarity">
    <text evidence="1">Belongs to the membrane fusion protein (MFP) (TC 8.A.1) family.</text>
</comment>
<feature type="chain" id="PRO_0000300559" description="p-hydroxybenzoic acid efflux pump subunit AaeA">
    <location>
        <begin position="1"/>
        <end position="311"/>
    </location>
</feature>
<feature type="transmembrane region" description="Helical" evidence="1">
    <location>
        <begin position="11"/>
        <end position="31"/>
    </location>
</feature>